<reference key="1">
    <citation type="journal article" date="2005" name="PLoS Biol.">
        <title>Major structural differences and novel potential virulence mechanisms from the genomes of multiple Campylobacter species.</title>
        <authorList>
            <person name="Fouts D.E."/>
            <person name="Mongodin E.F."/>
            <person name="Mandrell R.E."/>
            <person name="Miller W.G."/>
            <person name="Rasko D.A."/>
            <person name="Ravel J."/>
            <person name="Brinkac L.M."/>
            <person name="DeBoy R.T."/>
            <person name="Parker C.T."/>
            <person name="Daugherty S.C."/>
            <person name="Dodson R.J."/>
            <person name="Durkin A.S."/>
            <person name="Madupu R."/>
            <person name="Sullivan S.A."/>
            <person name="Shetty J.U."/>
            <person name="Ayodeji M.A."/>
            <person name="Shvartsbeyn A."/>
            <person name="Schatz M.C."/>
            <person name="Badger J.H."/>
            <person name="Fraser C.M."/>
            <person name="Nelson K.E."/>
        </authorList>
    </citation>
    <scope>NUCLEOTIDE SEQUENCE [LARGE SCALE GENOMIC DNA]</scope>
    <source>
        <strain>RM1221</strain>
    </source>
</reference>
<protein>
    <recommendedName>
        <fullName evidence="1">Phosphoribosylaminoimidazole-succinocarboxamide synthase</fullName>
        <ecNumber evidence="1">6.3.2.6</ecNumber>
    </recommendedName>
    <alternativeName>
        <fullName evidence="1">SAICAR synthetase</fullName>
    </alternativeName>
</protein>
<organism>
    <name type="scientific">Campylobacter jejuni (strain RM1221)</name>
    <dbReference type="NCBI Taxonomy" id="195099"/>
    <lineage>
        <taxon>Bacteria</taxon>
        <taxon>Pseudomonadati</taxon>
        <taxon>Campylobacterota</taxon>
        <taxon>Epsilonproteobacteria</taxon>
        <taxon>Campylobacterales</taxon>
        <taxon>Campylobacteraceae</taxon>
        <taxon>Campylobacter</taxon>
    </lineage>
</organism>
<gene>
    <name evidence="1" type="primary">purC</name>
    <name type="ordered locus">CJE0619</name>
</gene>
<name>PUR7_CAMJR</name>
<evidence type="ECO:0000255" key="1">
    <source>
        <dbReference type="HAMAP-Rule" id="MF_00137"/>
    </source>
</evidence>
<keyword id="KW-0067">ATP-binding</keyword>
<keyword id="KW-0436">Ligase</keyword>
<keyword id="KW-0547">Nucleotide-binding</keyword>
<keyword id="KW-0658">Purine biosynthesis</keyword>
<dbReference type="EC" id="6.3.2.6" evidence="1"/>
<dbReference type="EMBL" id="CP000025">
    <property type="protein sequence ID" value="AAW35868.1"/>
    <property type="molecule type" value="Genomic_DNA"/>
</dbReference>
<dbReference type="RefSeq" id="WP_002867669.1">
    <property type="nucleotide sequence ID" value="NC_003912.7"/>
</dbReference>
<dbReference type="SMR" id="Q5HVQ1"/>
<dbReference type="KEGG" id="cjr:CJE0619"/>
<dbReference type="HOGENOM" id="CLU_061495_2_0_7"/>
<dbReference type="UniPathway" id="UPA00074">
    <property type="reaction ID" value="UER00131"/>
</dbReference>
<dbReference type="GO" id="GO:0005524">
    <property type="term" value="F:ATP binding"/>
    <property type="evidence" value="ECO:0007669"/>
    <property type="project" value="UniProtKB-KW"/>
</dbReference>
<dbReference type="GO" id="GO:0004639">
    <property type="term" value="F:phosphoribosylaminoimidazolesuccinocarboxamide synthase activity"/>
    <property type="evidence" value="ECO:0007669"/>
    <property type="project" value="UniProtKB-UniRule"/>
</dbReference>
<dbReference type="GO" id="GO:0006189">
    <property type="term" value="P:'de novo' IMP biosynthetic process"/>
    <property type="evidence" value="ECO:0007669"/>
    <property type="project" value="UniProtKB-UniRule"/>
</dbReference>
<dbReference type="GO" id="GO:0009236">
    <property type="term" value="P:cobalamin biosynthetic process"/>
    <property type="evidence" value="ECO:0007669"/>
    <property type="project" value="InterPro"/>
</dbReference>
<dbReference type="CDD" id="cd01415">
    <property type="entry name" value="SAICAR_synt_PurC"/>
    <property type="match status" value="1"/>
</dbReference>
<dbReference type="FunFam" id="3.30.470.20:FF:000006">
    <property type="entry name" value="Phosphoribosylaminoimidazole-succinocarboxamide synthase"/>
    <property type="match status" value="1"/>
</dbReference>
<dbReference type="Gene3D" id="3.30.470.20">
    <property type="entry name" value="ATP-grasp fold, B domain"/>
    <property type="match status" value="1"/>
</dbReference>
<dbReference type="Gene3D" id="3.30.200.20">
    <property type="entry name" value="Phosphorylase Kinase, domain 1"/>
    <property type="match status" value="1"/>
</dbReference>
<dbReference type="HAMAP" id="MF_00137">
    <property type="entry name" value="SAICAR_synth"/>
    <property type="match status" value="1"/>
</dbReference>
<dbReference type="InterPro" id="IPR028923">
    <property type="entry name" value="SAICAR_synt/ADE2_N"/>
</dbReference>
<dbReference type="InterPro" id="IPR033934">
    <property type="entry name" value="SAICAR_synt_PurC"/>
</dbReference>
<dbReference type="InterPro" id="IPR001636">
    <property type="entry name" value="SAICAR_synth"/>
</dbReference>
<dbReference type="InterPro" id="IPR050089">
    <property type="entry name" value="SAICAR_synthetase"/>
</dbReference>
<dbReference type="InterPro" id="IPR018236">
    <property type="entry name" value="SAICAR_synthetase_CS"/>
</dbReference>
<dbReference type="NCBIfam" id="TIGR00081">
    <property type="entry name" value="purC"/>
    <property type="match status" value="1"/>
</dbReference>
<dbReference type="PANTHER" id="PTHR43599">
    <property type="entry name" value="MULTIFUNCTIONAL PROTEIN ADE2"/>
    <property type="match status" value="1"/>
</dbReference>
<dbReference type="PANTHER" id="PTHR43599:SF3">
    <property type="entry name" value="SI:DKEY-6E2.2"/>
    <property type="match status" value="1"/>
</dbReference>
<dbReference type="Pfam" id="PF01259">
    <property type="entry name" value="SAICAR_synt"/>
    <property type="match status" value="1"/>
</dbReference>
<dbReference type="SUPFAM" id="SSF56104">
    <property type="entry name" value="SAICAR synthase-like"/>
    <property type="match status" value="1"/>
</dbReference>
<dbReference type="PROSITE" id="PS01057">
    <property type="entry name" value="SAICAR_SYNTHETASE_1"/>
    <property type="match status" value="1"/>
</dbReference>
<feature type="chain" id="PRO_0000100812" description="Phosphoribosylaminoimidazole-succinocarboxamide synthase">
    <location>
        <begin position="1"/>
        <end position="236"/>
    </location>
</feature>
<sequence length="236" mass="26954">MTKKEMLYEGKGKKLFKTDDENLLISEFKDDLTAFNAEKRGNESGKGALNCRISTEIFHLLEKNGIKTHLVETISDTEQVVKKCKIVPIEVIVRNVATGSLTKRLGIKDGTVLPFALVEFCLKDDALGDPFINDEHCLILNLVQNEAQISEIKNMARKINSILTPFFDNKNLRLIDFKIELGLTKDNELVLADEISPDSCRFWDKFSNEKLDKDRFRQDLGNVKMAYEEVLKRILN</sequence>
<proteinExistence type="inferred from homology"/>
<accession>Q5HVQ1</accession>
<comment type="catalytic activity">
    <reaction evidence="1">
        <text>5-amino-1-(5-phospho-D-ribosyl)imidazole-4-carboxylate + L-aspartate + ATP = (2S)-2-[5-amino-1-(5-phospho-beta-D-ribosyl)imidazole-4-carboxamido]succinate + ADP + phosphate + 2 H(+)</text>
        <dbReference type="Rhea" id="RHEA:22628"/>
        <dbReference type="ChEBI" id="CHEBI:15378"/>
        <dbReference type="ChEBI" id="CHEBI:29991"/>
        <dbReference type="ChEBI" id="CHEBI:30616"/>
        <dbReference type="ChEBI" id="CHEBI:43474"/>
        <dbReference type="ChEBI" id="CHEBI:58443"/>
        <dbReference type="ChEBI" id="CHEBI:77657"/>
        <dbReference type="ChEBI" id="CHEBI:456216"/>
        <dbReference type="EC" id="6.3.2.6"/>
    </reaction>
</comment>
<comment type="pathway">
    <text evidence="1">Purine metabolism; IMP biosynthesis via de novo pathway; 5-amino-1-(5-phospho-D-ribosyl)imidazole-4-carboxamide from 5-amino-1-(5-phospho-D-ribosyl)imidazole-4-carboxylate: step 1/2.</text>
</comment>
<comment type="similarity">
    <text evidence="1">Belongs to the SAICAR synthetase family.</text>
</comment>